<evidence type="ECO:0000255" key="1">
    <source>
        <dbReference type="HAMAP-Rule" id="MF_00034"/>
    </source>
</evidence>
<gene>
    <name evidence="1" type="primary">ruvC</name>
    <name type="ordered locus">Hac_1242</name>
</gene>
<keyword id="KW-0963">Cytoplasm</keyword>
<keyword id="KW-0227">DNA damage</keyword>
<keyword id="KW-0233">DNA recombination</keyword>
<keyword id="KW-0234">DNA repair</keyword>
<keyword id="KW-0238">DNA-binding</keyword>
<keyword id="KW-0255">Endonuclease</keyword>
<keyword id="KW-0378">Hydrolase</keyword>
<keyword id="KW-0460">Magnesium</keyword>
<keyword id="KW-0479">Metal-binding</keyword>
<keyword id="KW-0540">Nuclease</keyword>
<reference key="1">
    <citation type="journal article" date="2006" name="PLoS Genet.">
        <title>Who ate whom? Adaptive Helicobacter genomic changes that accompanied a host jump from early humans to large felines.</title>
        <authorList>
            <person name="Eppinger M."/>
            <person name="Baar C."/>
            <person name="Linz B."/>
            <person name="Raddatz G."/>
            <person name="Lanz C."/>
            <person name="Keller H."/>
            <person name="Morelli G."/>
            <person name="Gressmann H."/>
            <person name="Achtman M."/>
            <person name="Schuster S.C."/>
        </authorList>
    </citation>
    <scope>NUCLEOTIDE SEQUENCE [LARGE SCALE GENOMIC DNA]</scope>
    <source>
        <strain>Sheeba</strain>
    </source>
</reference>
<proteinExistence type="inferred from homology"/>
<sequence length="157" mass="17501">MHILGIDPGSRKCGYAIISYASNKLSLITAGFINITTTHLQEQILDLIEALDCLLDRYEVHEVAIEDIFFGYNPKSVIKLAQFRGALSLKILERVGNFSEYTPLQVKKALTGNGKAAKEQVAFMVKRLLHITSEIKPLDISDAIAVAIMHAQRLKLY</sequence>
<organism>
    <name type="scientific">Helicobacter acinonychis (strain Sheeba)</name>
    <dbReference type="NCBI Taxonomy" id="382638"/>
    <lineage>
        <taxon>Bacteria</taxon>
        <taxon>Pseudomonadati</taxon>
        <taxon>Campylobacterota</taxon>
        <taxon>Epsilonproteobacteria</taxon>
        <taxon>Campylobacterales</taxon>
        <taxon>Helicobacteraceae</taxon>
        <taxon>Helicobacter</taxon>
    </lineage>
</organism>
<name>RUVC_HELAH</name>
<accession>Q17WI2</accession>
<dbReference type="EC" id="3.1.21.10" evidence="1"/>
<dbReference type="EMBL" id="AM260522">
    <property type="protein sequence ID" value="CAJ99994.1"/>
    <property type="molecule type" value="Genomic_DNA"/>
</dbReference>
<dbReference type="RefSeq" id="WP_011578100.1">
    <property type="nucleotide sequence ID" value="NC_008229.1"/>
</dbReference>
<dbReference type="SMR" id="Q17WI2"/>
<dbReference type="STRING" id="382638.Hac_1242"/>
<dbReference type="GeneID" id="31758586"/>
<dbReference type="KEGG" id="hac:Hac_1242"/>
<dbReference type="eggNOG" id="COG0817">
    <property type="taxonomic scope" value="Bacteria"/>
</dbReference>
<dbReference type="HOGENOM" id="CLU_091257_3_0_7"/>
<dbReference type="OrthoDB" id="9805499at2"/>
<dbReference type="BioCyc" id="HACI382638:HAC_RS05370-MONOMER"/>
<dbReference type="Proteomes" id="UP000000775">
    <property type="component" value="Chromosome"/>
</dbReference>
<dbReference type="GO" id="GO:0005737">
    <property type="term" value="C:cytoplasm"/>
    <property type="evidence" value="ECO:0007669"/>
    <property type="project" value="UniProtKB-SubCell"/>
</dbReference>
<dbReference type="GO" id="GO:0048476">
    <property type="term" value="C:Holliday junction resolvase complex"/>
    <property type="evidence" value="ECO:0007669"/>
    <property type="project" value="UniProtKB-UniRule"/>
</dbReference>
<dbReference type="GO" id="GO:0008821">
    <property type="term" value="F:crossover junction DNA endonuclease activity"/>
    <property type="evidence" value="ECO:0007669"/>
    <property type="project" value="UniProtKB-UniRule"/>
</dbReference>
<dbReference type="GO" id="GO:0003677">
    <property type="term" value="F:DNA binding"/>
    <property type="evidence" value="ECO:0007669"/>
    <property type="project" value="UniProtKB-KW"/>
</dbReference>
<dbReference type="GO" id="GO:0000287">
    <property type="term" value="F:magnesium ion binding"/>
    <property type="evidence" value="ECO:0007669"/>
    <property type="project" value="UniProtKB-UniRule"/>
</dbReference>
<dbReference type="GO" id="GO:0006310">
    <property type="term" value="P:DNA recombination"/>
    <property type="evidence" value="ECO:0007669"/>
    <property type="project" value="UniProtKB-UniRule"/>
</dbReference>
<dbReference type="GO" id="GO:0006281">
    <property type="term" value="P:DNA repair"/>
    <property type="evidence" value="ECO:0007669"/>
    <property type="project" value="UniProtKB-UniRule"/>
</dbReference>
<dbReference type="CDD" id="cd16962">
    <property type="entry name" value="RuvC"/>
    <property type="match status" value="1"/>
</dbReference>
<dbReference type="FunFam" id="3.30.420.10:FF:000002">
    <property type="entry name" value="Crossover junction endodeoxyribonuclease RuvC"/>
    <property type="match status" value="1"/>
</dbReference>
<dbReference type="Gene3D" id="3.30.420.10">
    <property type="entry name" value="Ribonuclease H-like superfamily/Ribonuclease H"/>
    <property type="match status" value="1"/>
</dbReference>
<dbReference type="HAMAP" id="MF_00034">
    <property type="entry name" value="RuvC"/>
    <property type="match status" value="1"/>
</dbReference>
<dbReference type="InterPro" id="IPR012337">
    <property type="entry name" value="RNaseH-like_sf"/>
</dbReference>
<dbReference type="InterPro" id="IPR036397">
    <property type="entry name" value="RNaseH_sf"/>
</dbReference>
<dbReference type="InterPro" id="IPR020563">
    <property type="entry name" value="X-over_junc_endoDNase_Mg_BS"/>
</dbReference>
<dbReference type="InterPro" id="IPR002176">
    <property type="entry name" value="X-over_junc_endoDNase_RuvC"/>
</dbReference>
<dbReference type="NCBIfam" id="TIGR00228">
    <property type="entry name" value="ruvC"/>
    <property type="match status" value="1"/>
</dbReference>
<dbReference type="PANTHER" id="PTHR30194">
    <property type="entry name" value="CROSSOVER JUNCTION ENDODEOXYRIBONUCLEASE RUVC"/>
    <property type="match status" value="1"/>
</dbReference>
<dbReference type="PANTHER" id="PTHR30194:SF3">
    <property type="entry name" value="CROSSOVER JUNCTION ENDODEOXYRIBONUCLEASE RUVC"/>
    <property type="match status" value="1"/>
</dbReference>
<dbReference type="Pfam" id="PF02075">
    <property type="entry name" value="RuvC"/>
    <property type="match status" value="1"/>
</dbReference>
<dbReference type="PRINTS" id="PR00696">
    <property type="entry name" value="RSOLVASERUVC"/>
</dbReference>
<dbReference type="SUPFAM" id="SSF53098">
    <property type="entry name" value="Ribonuclease H-like"/>
    <property type="match status" value="1"/>
</dbReference>
<dbReference type="PROSITE" id="PS01321">
    <property type="entry name" value="RUVC"/>
    <property type="match status" value="1"/>
</dbReference>
<protein>
    <recommendedName>
        <fullName evidence="1">Crossover junction endodeoxyribonuclease RuvC</fullName>
        <ecNumber evidence="1">3.1.21.10</ecNumber>
    </recommendedName>
    <alternativeName>
        <fullName evidence="1">Holliday junction nuclease RuvC</fullName>
    </alternativeName>
    <alternativeName>
        <fullName evidence="1">Holliday junction resolvase RuvC</fullName>
    </alternativeName>
</protein>
<feature type="chain" id="PRO_1000002766" description="Crossover junction endodeoxyribonuclease RuvC">
    <location>
        <begin position="1"/>
        <end position="157"/>
    </location>
</feature>
<feature type="active site" evidence="1">
    <location>
        <position position="7"/>
    </location>
</feature>
<feature type="active site" evidence="1">
    <location>
        <position position="66"/>
    </location>
</feature>
<feature type="active site" evidence="1">
    <location>
        <position position="139"/>
    </location>
</feature>
<feature type="binding site" evidence="1">
    <location>
        <position position="7"/>
    </location>
    <ligand>
        <name>Mg(2+)</name>
        <dbReference type="ChEBI" id="CHEBI:18420"/>
        <label>1</label>
    </ligand>
</feature>
<feature type="binding site" evidence="1">
    <location>
        <position position="66"/>
    </location>
    <ligand>
        <name>Mg(2+)</name>
        <dbReference type="ChEBI" id="CHEBI:18420"/>
        <label>2</label>
    </ligand>
</feature>
<feature type="binding site" evidence="1">
    <location>
        <position position="139"/>
    </location>
    <ligand>
        <name>Mg(2+)</name>
        <dbReference type="ChEBI" id="CHEBI:18420"/>
        <label>1</label>
    </ligand>
</feature>
<comment type="function">
    <text evidence="1">The RuvA-RuvB-RuvC complex processes Holliday junction (HJ) DNA during genetic recombination and DNA repair. Endonuclease that resolves HJ intermediates. Cleaves cruciform DNA by making single-stranded nicks across the HJ at symmetrical positions within the homologous arms, yielding a 5'-phosphate and a 3'-hydroxyl group; requires a central core of homology in the junction. The consensus cleavage sequence is 5'-(A/T)TT(C/G)-3'. Cleavage occurs on the 3'-side of the TT dinucleotide at the point of strand exchange. HJ branch migration catalyzed by RuvA-RuvB allows RuvC to scan DNA until it finds its consensus sequence, where it cleaves and resolves the cruciform DNA.</text>
</comment>
<comment type="catalytic activity">
    <reaction evidence="1">
        <text>Endonucleolytic cleavage at a junction such as a reciprocal single-stranded crossover between two homologous DNA duplexes (Holliday junction).</text>
        <dbReference type="EC" id="3.1.21.10"/>
    </reaction>
</comment>
<comment type="cofactor">
    <cofactor evidence="1">
        <name>Mg(2+)</name>
        <dbReference type="ChEBI" id="CHEBI:18420"/>
    </cofactor>
    <text evidence="1">Binds 2 Mg(2+) ion per subunit.</text>
</comment>
<comment type="subunit">
    <text evidence="1">Homodimer which binds Holliday junction (HJ) DNA. The HJ becomes 2-fold symmetrical on binding to RuvC with unstacked arms; it has a different conformation from HJ DNA in complex with RuvA. In the full resolvosome a probable DNA-RuvA(4)-RuvB(12)-RuvC(2) complex forms which resolves the HJ.</text>
</comment>
<comment type="subcellular location">
    <subcellularLocation>
        <location evidence="1">Cytoplasm</location>
    </subcellularLocation>
</comment>
<comment type="similarity">
    <text evidence="1">Belongs to the RuvC family.</text>
</comment>